<keyword id="KW-0067">ATP-binding</keyword>
<keyword id="KW-0133">Cell shape</keyword>
<keyword id="KW-0963">Cytoplasm</keyword>
<keyword id="KW-0547">Nucleotide-binding</keyword>
<keyword id="KW-1185">Reference proteome</keyword>
<gene>
    <name evidence="1" type="primary">mreB</name>
    <name type="ordered locus">STM3374</name>
</gene>
<accession>P0A9X6</accession>
<accession>P13519</accession>
<accession>P76678</accession>
<dbReference type="EMBL" id="AE006468">
    <property type="protein sequence ID" value="AAL22243.1"/>
    <property type="molecule type" value="Genomic_DNA"/>
</dbReference>
<dbReference type="RefSeq" id="NP_462284.1">
    <property type="nucleotide sequence ID" value="NC_003197.2"/>
</dbReference>
<dbReference type="RefSeq" id="WP_000913396.1">
    <property type="nucleotide sequence ID" value="NC_003197.2"/>
</dbReference>
<dbReference type="SMR" id="P0A9X6"/>
<dbReference type="STRING" id="99287.STM3374"/>
<dbReference type="PaxDb" id="99287-STM3374"/>
<dbReference type="GeneID" id="1254897"/>
<dbReference type="GeneID" id="98390376"/>
<dbReference type="KEGG" id="stm:STM3374"/>
<dbReference type="PATRIC" id="fig|99287.12.peg.3575"/>
<dbReference type="HOGENOM" id="CLU_052037_0_0_6"/>
<dbReference type="OMA" id="HEPTGNM"/>
<dbReference type="PhylomeDB" id="P0A9X6"/>
<dbReference type="BioCyc" id="SENT99287:STM3374-MONOMER"/>
<dbReference type="PRO" id="PR:P0A9X6"/>
<dbReference type="Proteomes" id="UP000001014">
    <property type="component" value="Chromosome"/>
</dbReference>
<dbReference type="GO" id="GO:0005737">
    <property type="term" value="C:cytoplasm"/>
    <property type="evidence" value="ECO:0007669"/>
    <property type="project" value="UniProtKB-SubCell"/>
</dbReference>
<dbReference type="GO" id="GO:0005524">
    <property type="term" value="F:ATP binding"/>
    <property type="evidence" value="ECO:0007669"/>
    <property type="project" value="UniProtKB-KW"/>
</dbReference>
<dbReference type="GO" id="GO:0000902">
    <property type="term" value="P:cell morphogenesis"/>
    <property type="evidence" value="ECO:0007669"/>
    <property type="project" value="InterPro"/>
</dbReference>
<dbReference type="GO" id="GO:0008360">
    <property type="term" value="P:regulation of cell shape"/>
    <property type="evidence" value="ECO:0007669"/>
    <property type="project" value="UniProtKB-UniRule"/>
</dbReference>
<dbReference type="CDD" id="cd10225">
    <property type="entry name" value="ASKHA_NBD_MreB-like"/>
    <property type="match status" value="1"/>
</dbReference>
<dbReference type="FunFam" id="3.30.420.40:FF:000014">
    <property type="entry name" value="Rod shape-determining protein MreB"/>
    <property type="match status" value="1"/>
</dbReference>
<dbReference type="FunFam" id="3.30.420.40:FF:000019">
    <property type="entry name" value="Rod shape-determining protein MreB"/>
    <property type="match status" value="1"/>
</dbReference>
<dbReference type="FunFam" id="3.30.420.40:FF:000016">
    <property type="entry name" value="Rod shape-determining protein mreB"/>
    <property type="match status" value="1"/>
</dbReference>
<dbReference type="Gene3D" id="3.30.420.40">
    <property type="match status" value="3"/>
</dbReference>
<dbReference type="HAMAP" id="MF_02207">
    <property type="entry name" value="MreB"/>
    <property type="match status" value="1"/>
</dbReference>
<dbReference type="InterPro" id="IPR043129">
    <property type="entry name" value="ATPase_NBD"/>
</dbReference>
<dbReference type="InterPro" id="IPR004753">
    <property type="entry name" value="MreB"/>
</dbReference>
<dbReference type="InterPro" id="IPR056546">
    <property type="entry name" value="MreB_MamK-like"/>
</dbReference>
<dbReference type="NCBIfam" id="TIGR00904">
    <property type="entry name" value="mreB"/>
    <property type="match status" value="1"/>
</dbReference>
<dbReference type="NCBIfam" id="NF010539">
    <property type="entry name" value="PRK13927.1"/>
    <property type="match status" value="1"/>
</dbReference>
<dbReference type="PANTHER" id="PTHR42749">
    <property type="entry name" value="CELL SHAPE-DETERMINING PROTEIN MREB"/>
    <property type="match status" value="1"/>
</dbReference>
<dbReference type="PANTHER" id="PTHR42749:SF1">
    <property type="entry name" value="CELL SHAPE-DETERMINING PROTEIN MREB"/>
    <property type="match status" value="1"/>
</dbReference>
<dbReference type="Pfam" id="PF06723">
    <property type="entry name" value="MreB_Mbl"/>
    <property type="match status" value="1"/>
</dbReference>
<dbReference type="PRINTS" id="PR01652">
    <property type="entry name" value="SHAPEPROTEIN"/>
</dbReference>
<dbReference type="SUPFAM" id="SSF53067">
    <property type="entry name" value="Actin-like ATPase domain"/>
    <property type="match status" value="2"/>
</dbReference>
<evidence type="ECO:0000255" key="1">
    <source>
        <dbReference type="HAMAP-Rule" id="MF_02207"/>
    </source>
</evidence>
<evidence type="ECO:0000305" key="2"/>
<feature type="chain" id="PRO_0000062764" description="Cell shape-determining protein MreB">
    <location>
        <begin position="1"/>
        <end position="347"/>
    </location>
</feature>
<feature type="binding site" evidence="1">
    <location>
        <begin position="19"/>
        <end position="21"/>
    </location>
    <ligand>
        <name>ATP</name>
        <dbReference type="ChEBI" id="CHEBI:30616"/>
    </ligand>
</feature>
<feature type="binding site" evidence="1">
    <location>
        <begin position="168"/>
        <end position="170"/>
    </location>
    <ligand>
        <name>ATP</name>
        <dbReference type="ChEBI" id="CHEBI:30616"/>
    </ligand>
</feature>
<feature type="binding site" evidence="1">
    <location>
        <begin position="216"/>
        <end position="219"/>
    </location>
    <ligand>
        <name>ATP</name>
        <dbReference type="ChEBI" id="CHEBI:30616"/>
    </ligand>
</feature>
<feature type="binding site" evidence="1">
    <location>
        <begin position="296"/>
        <end position="299"/>
    </location>
    <ligand>
        <name>ATP</name>
        <dbReference type="ChEBI" id="CHEBI:30616"/>
    </ligand>
</feature>
<reference key="1">
    <citation type="journal article" date="2001" name="Nature">
        <title>Complete genome sequence of Salmonella enterica serovar Typhimurium LT2.</title>
        <authorList>
            <person name="McClelland M."/>
            <person name="Sanderson K.E."/>
            <person name="Spieth J."/>
            <person name="Clifton S.W."/>
            <person name="Latreille P."/>
            <person name="Courtney L."/>
            <person name="Porwollik S."/>
            <person name="Ali J."/>
            <person name="Dante M."/>
            <person name="Du F."/>
            <person name="Hou S."/>
            <person name="Layman D."/>
            <person name="Leonard S."/>
            <person name="Nguyen C."/>
            <person name="Scott K."/>
            <person name="Holmes A."/>
            <person name="Grewal N."/>
            <person name="Mulvaney E."/>
            <person name="Ryan E."/>
            <person name="Sun H."/>
            <person name="Florea L."/>
            <person name="Miller W."/>
            <person name="Stoneking T."/>
            <person name="Nhan M."/>
            <person name="Waterston R."/>
            <person name="Wilson R.K."/>
        </authorList>
    </citation>
    <scope>NUCLEOTIDE SEQUENCE [LARGE SCALE GENOMIC DNA]</scope>
    <source>
        <strain>LT2 / SGSC1412 / ATCC 700720</strain>
    </source>
</reference>
<proteinExistence type="inferred from homology"/>
<organism>
    <name type="scientific">Salmonella typhimurium (strain LT2 / SGSC1412 / ATCC 700720)</name>
    <dbReference type="NCBI Taxonomy" id="99287"/>
    <lineage>
        <taxon>Bacteria</taxon>
        <taxon>Pseudomonadati</taxon>
        <taxon>Pseudomonadota</taxon>
        <taxon>Gammaproteobacteria</taxon>
        <taxon>Enterobacterales</taxon>
        <taxon>Enterobacteriaceae</taxon>
        <taxon>Salmonella</taxon>
    </lineage>
</organism>
<protein>
    <recommendedName>
        <fullName evidence="1">Cell shape-determining protein MreB</fullName>
    </recommendedName>
</protein>
<name>MREB_SALTY</name>
<sequence length="347" mass="36952">MLKKFRGMFSNDLSIDLGTANTLIYVKGQGIVLNEPSVVAIRQDRAGSPKSVAAVGHDAKQMLGRTPGNIAAIRPMKDGVIADFFVTEKMLQHFIKQVHSNSFMRPSPRVLVCVPVGATQVERRAIRESAQGAGAREVFLIEEPMAAAIGAGLPVSEATGSMVVDIGGGTTEVAVISLNGVVYSSSVRIGGDRFDEAIINYVRRNYGSLIGEATAERIKHEIGSAYPGDEVREIEVRGRNLAEGVPRGFTLNSNEILEALQEPLTGIVSAVMVALEQCPPELASDISERGMVLTGGGALLRNLDRLLMEETGIPVVVAEDPLTCVARGGGKALEMIDMHGGDLFSEE</sequence>
<comment type="function">
    <text evidence="1">Forms membrane-associated dynamic filaments that are essential for cell shape determination. Acts by regulating cell wall synthesis and cell elongation, and thus cell shape. A feedback loop between cell geometry and MreB localization may maintain elongated cell shape by targeting cell wall growth to regions of negative cell wall curvature.</text>
</comment>
<comment type="subunit">
    <text evidence="1">Forms polymers.</text>
</comment>
<comment type="subcellular location">
    <subcellularLocation>
        <location evidence="1">Cytoplasm</location>
    </subcellularLocation>
    <text evidence="1">Membrane-associated.</text>
</comment>
<comment type="similarity">
    <text evidence="1 2">Belongs to the FtsA/MreB family.</text>
</comment>